<reference key="1">
    <citation type="journal article" date="2005" name="BMC Genomics">
        <title>Bacterial genome adaptation to niches: divergence of the potential virulence genes in three Burkholderia species of different survival strategies.</title>
        <authorList>
            <person name="Kim H.S."/>
            <person name="Schell M.A."/>
            <person name="Yu Y."/>
            <person name="Ulrich R.L."/>
            <person name="Sarria S.H."/>
            <person name="Nierman W.C."/>
            <person name="DeShazer D."/>
        </authorList>
    </citation>
    <scope>NUCLEOTIDE SEQUENCE [LARGE SCALE GENOMIC DNA]</scope>
    <source>
        <strain>ATCC 700388 / DSM 13276 / CCUG 48851 / CIP 106301 / E264</strain>
    </source>
</reference>
<dbReference type="EC" id="1.1.1.37" evidence="2"/>
<dbReference type="EMBL" id="CP000085">
    <property type="protein sequence ID" value="ABC35693.1"/>
    <property type="molecule type" value="Genomic_DNA"/>
</dbReference>
<dbReference type="RefSeq" id="WP_009895814.1">
    <property type="nucleotide sequence ID" value="NZ_CP008786.1"/>
</dbReference>
<dbReference type="SMR" id="Q2T7J2"/>
<dbReference type="GeneID" id="45118146"/>
<dbReference type="KEGG" id="bte:BTH_II0658"/>
<dbReference type="HOGENOM" id="CLU_040727_2_0_4"/>
<dbReference type="Proteomes" id="UP000001930">
    <property type="component" value="Chromosome II"/>
</dbReference>
<dbReference type="GO" id="GO:0030060">
    <property type="term" value="F:L-malate dehydrogenase (NAD+) activity"/>
    <property type="evidence" value="ECO:0007669"/>
    <property type="project" value="UniProtKB-UniRule"/>
</dbReference>
<dbReference type="GO" id="GO:0006108">
    <property type="term" value="P:malate metabolic process"/>
    <property type="evidence" value="ECO:0007669"/>
    <property type="project" value="InterPro"/>
</dbReference>
<dbReference type="GO" id="GO:0006099">
    <property type="term" value="P:tricarboxylic acid cycle"/>
    <property type="evidence" value="ECO:0007669"/>
    <property type="project" value="UniProtKB-UniRule"/>
</dbReference>
<dbReference type="CDD" id="cd01338">
    <property type="entry name" value="MDH_chloroplast-like"/>
    <property type="match status" value="1"/>
</dbReference>
<dbReference type="FunFam" id="3.40.50.720:FF:000010">
    <property type="entry name" value="Malate dehydrogenase"/>
    <property type="match status" value="1"/>
</dbReference>
<dbReference type="FunFam" id="3.90.110.10:FF:000002">
    <property type="entry name" value="Malate dehydrogenase"/>
    <property type="match status" value="1"/>
</dbReference>
<dbReference type="Gene3D" id="3.90.110.10">
    <property type="entry name" value="Lactate dehydrogenase/glycoside hydrolase, family 4, C-terminal"/>
    <property type="match status" value="1"/>
</dbReference>
<dbReference type="Gene3D" id="3.40.50.720">
    <property type="entry name" value="NAD(P)-binding Rossmann-like Domain"/>
    <property type="match status" value="1"/>
</dbReference>
<dbReference type="HAMAP" id="MF_01517">
    <property type="entry name" value="Malate_dehydrog_2"/>
    <property type="match status" value="1"/>
</dbReference>
<dbReference type="InterPro" id="IPR001557">
    <property type="entry name" value="L-lactate/malate_DH"/>
</dbReference>
<dbReference type="InterPro" id="IPR022383">
    <property type="entry name" value="Lactate/malate_DH_C"/>
</dbReference>
<dbReference type="InterPro" id="IPR001236">
    <property type="entry name" value="Lactate/malate_DH_N"/>
</dbReference>
<dbReference type="InterPro" id="IPR015955">
    <property type="entry name" value="Lactate_DH/Glyco_Ohase_4_C"/>
</dbReference>
<dbReference type="InterPro" id="IPR010945">
    <property type="entry name" value="Malate_DH_type2"/>
</dbReference>
<dbReference type="InterPro" id="IPR036291">
    <property type="entry name" value="NAD(P)-bd_dom_sf"/>
</dbReference>
<dbReference type="NCBIfam" id="TIGR01759">
    <property type="entry name" value="MalateDH-SF1"/>
    <property type="match status" value="1"/>
</dbReference>
<dbReference type="NCBIfam" id="NF003916">
    <property type="entry name" value="PRK05442.1"/>
    <property type="match status" value="1"/>
</dbReference>
<dbReference type="PANTHER" id="PTHR23382">
    <property type="entry name" value="MALATE DEHYDROGENASE"/>
    <property type="match status" value="1"/>
</dbReference>
<dbReference type="Pfam" id="PF02866">
    <property type="entry name" value="Ldh_1_C"/>
    <property type="match status" value="1"/>
</dbReference>
<dbReference type="Pfam" id="PF00056">
    <property type="entry name" value="Ldh_1_N"/>
    <property type="match status" value="1"/>
</dbReference>
<dbReference type="PIRSF" id="PIRSF000102">
    <property type="entry name" value="Lac_mal_DH"/>
    <property type="match status" value="1"/>
</dbReference>
<dbReference type="SUPFAM" id="SSF56327">
    <property type="entry name" value="LDH C-terminal domain-like"/>
    <property type="match status" value="1"/>
</dbReference>
<dbReference type="SUPFAM" id="SSF51735">
    <property type="entry name" value="NAD(P)-binding Rossmann-fold domains"/>
    <property type="match status" value="1"/>
</dbReference>
<name>MDH1_BURTA</name>
<organism>
    <name type="scientific">Burkholderia thailandensis (strain ATCC 700388 / DSM 13276 / CCUG 48851 / CIP 106301 / E264)</name>
    <dbReference type="NCBI Taxonomy" id="271848"/>
    <lineage>
        <taxon>Bacteria</taxon>
        <taxon>Pseudomonadati</taxon>
        <taxon>Pseudomonadota</taxon>
        <taxon>Betaproteobacteria</taxon>
        <taxon>Burkholderiales</taxon>
        <taxon>Burkholderiaceae</taxon>
        <taxon>Burkholderia</taxon>
        <taxon>pseudomallei group</taxon>
    </lineage>
</organism>
<keyword id="KW-0520">NAD</keyword>
<keyword id="KW-0560">Oxidoreductase</keyword>
<keyword id="KW-0816">Tricarboxylic acid cycle</keyword>
<proteinExistence type="inferred from homology"/>
<gene>
    <name evidence="2" type="primary">mdh1</name>
    <name type="ordered locus">BTH_II0658</name>
</gene>
<evidence type="ECO:0000250" key="1"/>
<evidence type="ECO:0000255" key="2">
    <source>
        <dbReference type="HAMAP-Rule" id="MF_01517"/>
    </source>
</evidence>
<sequence>MAKPAKRVAVTGAAGQIAYSLLFRIANGDLLGKDQPVILQLLDLPQAQAAVKGVVMELDDCAFPLLAGVVITDDPKVAFKDADVALLVGARPRSKGMERKDLLSANAEIFTVQGAALNEVASRDVKVLVVGNPANTNAYIAMKSAPDLPKKNFTAMLRLDHNRALSQLAAKSGKPVASIEKLAVWGNHSPTMYPDFRFATAEGESLLKLINDDAWNRDTFIPTVGKRGAAIIEARGLSSAASAANAAIDHVRDWVLGTNGKWVTMGIPSDGSYGIPEDIIYGVPVTCENGEYKRVEGLEIDAFSREKMDGTLAELLEERDGVAHLLK</sequence>
<comment type="function">
    <text evidence="2">Catalyzes the reversible oxidation of malate to oxaloacetate.</text>
</comment>
<comment type="catalytic activity">
    <reaction evidence="2">
        <text>(S)-malate + NAD(+) = oxaloacetate + NADH + H(+)</text>
        <dbReference type="Rhea" id="RHEA:21432"/>
        <dbReference type="ChEBI" id="CHEBI:15378"/>
        <dbReference type="ChEBI" id="CHEBI:15589"/>
        <dbReference type="ChEBI" id="CHEBI:16452"/>
        <dbReference type="ChEBI" id="CHEBI:57540"/>
        <dbReference type="ChEBI" id="CHEBI:57945"/>
        <dbReference type="EC" id="1.1.1.37"/>
    </reaction>
</comment>
<comment type="similarity">
    <text evidence="2">Belongs to the LDH/MDH superfamily. MDH type 2 family.</text>
</comment>
<feature type="initiator methionine" description="Removed" evidence="1">
    <location>
        <position position="1"/>
    </location>
</feature>
<feature type="chain" id="PRO_0000292369" description="Malate dehydrogenase 1">
    <location>
        <begin position="2"/>
        <end position="327"/>
    </location>
</feature>
<feature type="active site" description="Proton acceptor" evidence="2">
    <location>
        <position position="188"/>
    </location>
</feature>
<feature type="binding site" evidence="2">
    <location>
        <begin position="12"/>
        <end position="18"/>
    </location>
    <ligand>
        <name>NAD(+)</name>
        <dbReference type="ChEBI" id="CHEBI:57540"/>
    </ligand>
</feature>
<feature type="binding site" evidence="2">
    <location>
        <position position="93"/>
    </location>
    <ligand>
        <name>substrate</name>
    </ligand>
</feature>
<feature type="binding site" evidence="2">
    <location>
        <position position="99"/>
    </location>
    <ligand>
        <name>substrate</name>
    </ligand>
</feature>
<feature type="binding site" evidence="2">
    <location>
        <position position="106"/>
    </location>
    <ligand>
        <name>NAD(+)</name>
        <dbReference type="ChEBI" id="CHEBI:57540"/>
    </ligand>
</feature>
<feature type="binding site" evidence="2">
    <location>
        <position position="113"/>
    </location>
    <ligand>
        <name>NAD(+)</name>
        <dbReference type="ChEBI" id="CHEBI:57540"/>
    </ligand>
</feature>
<feature type="binding site" evidence="2">
    <location>
        <begin position="130"/>
        <end position="132"/>
    </location>
    <ligand>
        <name>NAD(+)</name>
        <dbReference type="ChEBI" id="CHEBI:57540"/>
    </ligand>
</feature>
<feature type="binding site" evidence="2">
    <location>
        <position position="132"/>
    </location>
    <ligand>
        <name>substrate</name>
    </ligand>
</feature>
<feature type="binding site" evidence="2">
    <location>
        <position position="163"/>
    </location>
    <ligand>
        <name>substrate</name>
    </ligand>
</feature>
<accession>Q2T7J2</accession>
<protein>
    <recommendedName>
        <fullName evidence="2">Malate dehydrogenase 1</fullName>
        <ecNumber evidence="2">1.1.1.37</ecNumber>
    </recommendedName>
</protein>